<protein>
    <recommendedName>
        <fullName>Ciliary microtubule inner protein 2A</fullName>
    </recommendedName>
</protein>
<reference key="1">
    <citation type="journal article" date="2005" name="Science">
        <title>The transcriptional landscape of the mammalian genome.</title>
        <authorList>
            <person name="Carninci P."/>
            <person name="Kasukawa T."/>
            <person name="Katayama S."/>
            <person name="Gough J."/>
            <person name="Frith M.C."/>
            <person name="Maeda N."/>
            <person name="Oyama R."/>
            <person name="Ravasi T."/>
            <person name="Lenhard B."/>
            <person name="Wells C."/>
            <person name="Kodzius R."/>
            <person name="Shimokawa K."/>
            <person name="Bajic V.B."/>
            <person name="Brenner S.E."/>
            <person name="Batalov S."/>
            <person name="Forrest A.R."/>
            <person name="Zavolan M."/>
            <person name="Davis M.J."/>
            <person name="Wilming L.G."/>
            <person name="Aidinis V."/>
            <person name="Allen J.E."/>
            <person name="Ambesi-Impiombato A."/>
            <person name="Apweiler R."/>
            <person name="Aturaliya R.N."/>
            <person name="Bailey T.L."/>
            <person name="Bansal M."/>
            <person name="Baxter L."/>
            <person name="Beisel K.W."/>
            <person name="Bersano T."/>
            <person name="Bono H."/>
            <person name="Chalk A.M."/>
            <person name="Chiu K.P."/>
            <person name="Choudhary V."/>
            <person name="Christoffels A."/>
            <person name="Clutterbuck D.R."/>
            <person name="Crowe M.L."/>
            <person name="Dalla E."/>
            <person name="Dalrymple B.P."/>
            <person name="de Bono B."/>
            <person name="Della Gatta G."/>
            <person name="di Bernardo D."/>
            <person name="Down T."/>
            <person name="Engstrom P."/>
            <person name="Fagiolini M."/>
            <person name="Faulkner G."/>
            <person name="Fletcher C.F."/>
            <person name="Fukushima T."/>
            <person name="Furuno M."/>
            <person name="Futaki S."/>
            <person name="Gariboldi M."/>
            <person name="Georgii-Hemming P."/>
            <person name="Gingeras T.R."/>
            <person name="Gojobori T."/>
            <person name="Green R.E."/>
            <person name="Gustincich S."/>
            <person name="Harbers M."/>
            <person name="Hayashi Y."/>
            <person name="Hensch T.K."/>
            <person name="Hirokawa N."/>
            <person name="Hill D."/>
            <person name="Huminiecki L."/>
            <person name="Iacono M."/>
            <person name="Ikeo K."/>
            <person name="Iwama A."/>
            <person name="Ishikawa T."/>
            <person name="Jakt M."/>
            <person name="Kanapin A."/>
            <person name="Katoh M."/>
            <person name="Kawasawa Y."/>
            <person name="Kelso J."/>
            <person name="Kitamura H."/>
            <person name="Kitano H."/>
            <person name="Kollias G."/>
            <person name="Krishnan S.P."/>
            <person name="Kruger A."/>
            <person name="Kummerfeld S.K."/>
            <person name="Kurochkin I.V."/>
            <person name="Lareau L.F."/>
            <person name="Lazarevic D."/>
            <person name="Lipovich L."/>
            <person name="Liu J."/>
            <person name="Liuni S."/>
            <person name="McWilliam S."/>
            <person name="Madan Babu M."/>
            <person name="Madera M."/>
            <person name="Marchionni L."/>
            <person name="Matsuda H."/>
            <person name="Matsuzawa S."/>
            <person name="Miki H."/>
            <person name="Mignone F."/>
            <person name="Miyake S."/>
            <person name="Morris K."/>
            <person name="Mottagui-Tabar S."/>
            <person name="Mulder N."/>
            <person name="Nakano N."/>
            <person name="Nakauchi H."/>
            <person name="Ng P."/>
            <person name="Nilsson R."/>
            <person name="Nishiguchi S."/>
            <person name="Nishikawa S."/>
            <person name="Nori F."/>
            <person name="Ohara O."/>
            <person name="Okazaki Y."/>
            <person name="Orlando V."/>
            <person name="Pang K.C."/>
            <person name="Pavan W.J."/>
            <person name="Pavesi G."/>
            <person name="Pesole G."/>
            <person name="Petrovsky N."/>
            <person name="Piazza S."/>
            <person name="Reed J."/>
            <person name="Reid J.F."/>
            <person name="Ring B.Z."/>
            <person name="Ringwald M."/>
            <person name="Rost B."/>
            <person name="Ruan Y."/>
            <person name="Salzberg S.L."/>
            <person name="Sandelin A."/>
            <person name="Schneider C."/>
            <person name="Schoenbach C."/>
            <person name="Sekiguchi K."/>
            <person name="Semple C.A."/>
            <person name="Seno S."/>
            <person name="Sessa L."/>
            <person name="Sheng Y."/>
            <person name="Shibata Y."/>
            <person name="Shimada H."/>
            <person name="Shimada K."/>
            <person name="Silva D."/>
            <person name="Sinclair B."/>
            <person name="Sperling S."/>
            <person name="Stupka E."/>
            <person name="Sugiura K."/>
            <person name="Sultana R."/>
            <person name="Takenaka Y."/>
            <person name="Taki K."/>
            <person name="Tammoja K."/>
            <person name="Tan S.L."/>
            <person name="Tang S."/>
            <person name="Taylor M.S."/>
            <person name="Tegner J."/>
            <person name="Teichmann S.A."/>
            <person name="Ueda H.R."/>
            <person name="van Nimwegen E."/>
            <person name="Verardo R."/>
            <person name="Wei C.L."/>
            <person name="Yagi K."/>
            <person name="Yamanishi H."/>
            <person name="Zabarovsky E."/>
            <person name="Zhu S."/>
            <person name="Zimmer A."/>
            <person name="Hide W."/>
            <person name="Bult C."/>
            <person name="Grimmond S.M."/>
            <person name="Teasdale R.D."/>
            <person name="Liu E.T."/>
            <person name="Brusic V."/>
            <person name="Quackenbush J."/>
            <person name="Wahlestedt C."/>
            <person name="Mattick J.S."/>
            <person name="Hume D.A."/>
            <person name="Kai C."/>
            <person name="Sasaki D."/>
            <person name="Tomaru Y."/>
            <person name="Fukuda S."/>
            <person name="Kanamori-Katayama M."/>
            <person name="Suzuki M."/>
            <person name="Aoki J."/>
            <person name="Arakawa T."/>
            <person name="Iida J."/>
            <person name="Imamura K."/>
            <person name="Itoh M."/>
            <person name="Kato T."/>
            <person name="Kawaji H."/>
            <person name="Kawagashira N."/>
            <person name="Kawashima T."/>
            <person name="Kojima M."/>
            <person name="Kondo S."/>
            <person name="Konno H."/>
            <person name="Nakano K."/>
            <person name="Ninomiya N."/>
            <person name="Nishio T."/>
            <person name="Okada M."/>
            <person name="Plessy C."/>
            <person name="Shibata K."/>
            <person name="Shiraki T."/>
            <person name="Suzuki S."/>
            <person name="Tagami M."/>
            <person name="Waki K."/>
            <person name="Watahiki A."/>
            <person name="Okamura-Oho Y."/>
            <person name="Suzuki H."/>
            <person name="Kawai J."/>
            <person name="Hayashizaki Y."/>
        </authorList>
    </citation>
    <scope>NUCLEOTIDE SEQUENCE [LARGE SCALE MRNA]</scope>
    <source>
        <strain>C57BL/6J</strain>
        <tissue>Testis</tissue>
    </source>
</reference>
<reference key="2">
    <citation type="journal article" date="2009" name="PLoS Biol.">
        <title>Lineage-specific biology revealed by a finished genome assembly of the mouse.</title>
        <authorList>
            <person name="Church D.M."/>
            <person name="Goodstadt L."/>
            <person name="Hillier L.W."/>
            <person name="Zody M.C."/>
            <person name="Goldstein S."/>
            <person name="She X."/>
            <person name="Bult C.J."/>
            <person name="Agarwala R."/>
            <person name="Cherry J.L."/>
            <person name="DiCuccio M."/>
            <person name="Hlavina W."/>
            <person name="Kapustin Y."/>
            <person name="Meric P."/>
            <person name="Maglott D."/>
            <person name="Birtle Z."/>
            <person name="Marques A.C."/>
            <person name="Graves T."/>
            <person name="Zhou S."/>
            <person name="Teague B."/>
            <person name="Potamousis K."/>
            <person name="Churas C."/>
            <person name="Place M."/>
            <person name="Herschleb J."/>
            <person name="Runnheim R."/>
            <person name="Forrest D."/>
            <person name="Amos-Landgraf J."/>
            <person name="Schwartz D.C."/>
            <person name="Cheng Z."/>
            <person name="Lindblad-Toh K."/>
            <person name="Eichler E.E."/>
            <person name="Ponting C.P."/>
        </authorList>
    </citation>
    <scope>NUCLEOTIDE SEQUENCE [LARGE SCALE GENOMIC DNA]</scope>
    <source>
        <strain>C57BL/6J</strain>
    </source>
</reference>
<reference key="3">
    <citation type="journal article" date="2004" name="Genome Res.">
        <title>The status, quality, and expansion of the NIH full-length cDNA project: the Mammalian Gene Collection (MGC).</title>
        <authorList>
            <consortium name="The MGC Project Team"/>
        </authorList>
    </citation>
    <scope>NUCLEOTIDE SEQUENCE [LARGE SCALE MRNA]</scope>
    <source>
        <tissue>Testis</tissue>
    </source>
</reference>
<reference evidence="6" key="4">
    <citation type="journal article" date="2023" name="Cell">
        <title>Structures of sperm flagellar doublet microtubules expand the genetic spectrum of male infertility.</title>
        <authorList>
            <person name="Zhou L."/>
            <person name="Liu H."/>
            <person name="Liu S."/>
            <person name="Yang X."/>
            <person name="Dong Y."/>
            <person name="Pan Y."/>
            <person name="Xiao Z."/>
            <person name="Zheng B."/>
            <person name="Sun Y."/>
            <person name="Huang P."/>
            <person name="Zhang X."/>
            <person name="Hu J."/>
            <person name="Sun R."/>
            <person name="Feng S."/>
            <person name="Zhu Y."/>
            <person name="Liu M."/>
            <person name="Gui M."/>
            <person name="Wu J."/>
        </authorList>
    </citation>
    <scope>STRUCTURE BY ELECTRON MICROSCOPY (3.50 ANGSTROMS) OF SPERM FLAGELLAR DOUBLET MICROTUBULES</scope>
    <scope>FUNCTION</scope>
    <scope>SUBCELLULAR LOCATION</scope>
    <scope>SUBUNIT</scope>
</reference>
<reference evidence="4 5" key="5">
    <citation type="journal article" date="2023" name="Cell Discov.">
        <title>In-cell structural insight into the stability of sperm microtubule doublet.</title>
        <authorList>
            <person name="Tai L."/>
            <person name="Yin G."/>
            <person name="Huang X."/>
            <person name="Sun F."/>
            <person name="Zhu Y."/>
        </authorList>
    </citation>
    <scope>STRUCTURE BY ELECTRON MICROSCOPY (4.50 ANGSTROMS)</scope>
    <scope>FUNCTION</scope>
    <scope>SUBUNIT</scope>
    <scope>SUBCELLULAR LOCATION</scope>
</reference>
<comment type="function">
    <text evidence="1 2">Microtubule inner protein (MIP) part of the dynein-decorated doublet microtubules (DMTs) in flagellum axoneme (PubMed:37295417, PubMed:37989994). Binds to the intra-tubulin interfaces (PubMed:37295417).</text>
</comment>
<comment type="subunit">
    <text evidence="1 2">Microtubule inner protein component of sperm flagellar doublet microtubules.</text>
</comment>
<comment type="subcellular location">
    <subcellularLocation>
        <location evidence="1 2">Cytoplasm</location>
        <location evidence="1 2">Cytoskeleton</location>
        <location evidence="1 2">Flagellum axoneme</location>
    </subcellularLocation>
</comment>
<comment type="similarity">
    <text evidence="3">Belongs to the CIMIP2 family.</text>
</comment>
<accession>Q9D4K5</accession>
<gene>
    <name type="primary">Cimip2a</name>
    <name type="synonym">Fam166a</name>
</gene>
<name>CMI2A_MOUSE</name>
<evidence type="ECO:0000269" key="1">
    <source>
    </source>
</evidence>
<evidence type="ECO:0000269" key="2">
    <source>
    </source>
</evidence>
<evidence type="ECO:0000305" key="3"/>
<evidence type="ECO:0007744" key="4">
    <source>
        <dbReference type="PDB" id="8I7O"/>
    </source>
</evidence>
<evidence type="ECO:0007744" key="5">
    <source>
        <dbReference type="PDB" id="8I7R"/>
    </source>
</evidence>
<evidence type="ECO:0007744" key="6">
    <source>
        <dbReference type="PDB" id="8IYJ"/>
    </source>
</evidence>
<organism>
    <name type="scientific">Mus musculus</name>
    <name type="common">Mouse</name>
    <dbReference type="NCBI Taxonomy" id="10090"/>
    <lineage>
        <taxon>Eukaryota</taxon>
        <taxon>Metazoa</taxon>
        <taxon>Chordata</taxon>
        <taxon>Craniata</taxon>
        <taxon>Vertebrata</taxon>
        <taxon>Euteleostomi</taxon>
        <taxon>Mammalia</taxon>
        <taxon>Eutheria</taxon>
        <taxon>Euarchontoglires</taxon>
        <taxon>Glires</taxon>
        <taxon>Rodentia</taxon>
        <taxon>Myomorpha</taxon>
        <taxon>Muroidea</taxon>
        <taxon>Muridae</taxon>
        <taxon>Murinae</taxon>
        <taxon>Mus</taxon>
        <taxon>Mus</taxon>
    </lineage>
</organism>
<sequence>MTATQKHNLFTPEPHYIPGYAGFYPQLRYQVGNTYGRTTAQLLTDPSVQKSPCSVLSPMTKPKFIEDFSKSKPPWIPCRDLREPYIPHYTSLKPYKNFEILGQLPRQDVDTQGPPQVENRQGPLTAGFMPYPPYPACPPGRKGEARDLGHPGLLLAYGEEAWKDAAPLQDTPGKNNQLYHCRRDEYLPPHPPQETLDVGRFQRLPQLDHPNLIQRKAISGYAGFVPRFAWVMGMNYRDGVTQAMDDFDKNQFVFRHPVCALGERLPRTHWPNTTIYRSQGLIPFYMGFIPSMQDNYALTFGNSTRRAYQKELDRRSHTL</sequence>
<proteinExistence type="evidence at protein level"/>
<keyword id="KW-0002">3D-structure</keyword>
<keyword id="KW-0966">Cell projection</keyword>
<keyword id="KW-0969">Cilium</keyword>
<keyword id="KW-0963">Cytoplasm</keyword>
<keyword id="KW-0206">Cytoskeleton</keyword>
<keyword id="KW-0282">Flagellum</keyword>
<keyword id="KW-1185">Reference proteome</keyword>
<feature type="chain" id="PRO_0000325901" description="Ciliary microtubule inner protein 2A">
    <location>
        <begin position="1"/>
        <end position="319"/>
    </location>
</feature>
<dbReference type="EMBL" id="AK016459">
    <property type="protein sequence ID" value="BAB30248.1"/>
    <property type="molecule type" value="mRNA"/>
</dbReference>
<dbReference type="EMBL" id="AL732309">
    <property type="status" value="NOT_ANNOTATED_CDS"/>
    <property type="molecule type" value="Genomic_DNA"/>
</dbReference>
<dbReference type="EMBL" id="BC061039">
    <property type="protein sequence ID" value="AAH61039.1"/>
    <property type="molecule type" value="mRNA"/>
</dbReference>
<dbReference type="CCDS" id="CCDS15752.1"/>
<dbReference type="RefSeq" id="NP_001408822.1">
    <property type="nucleotide sequence ID" value="NM_001421893.1"/>
</dbReference>
<dbReference type="RefSeq" id="NP_001408823.1">
    <property type="nucleotide sequence ID" value="NM_001421894.1"/>
</dbReference>
<dbReference type="RefSeq" id="NP_001408824.1">
    <property type="nucleotide sequence ID" value="NM_001421895.1"/>
</dbReference>
<dbReference type="RefSeq" id="NP_001408825.1">
    <property type="nucleotide sequence ID" value="NM_001421896.1"/>
</dbReference>
<dbReference type="RefSeq" id="NP_001408826.1">
    <property type="nucleotide sequence ID" value="NM_001421897.1"/>
</dbReference>
<dbReference type="RefSeq" id="NP_080900.1">
    <property type="nucleotide sequence ID" value="NM_026624.4"/>
</dbReference>
<dbReference type="RefSeq" id="XP_006498331.1">
    <property type="nucleotide sequence ID" value="XM_006498268.5"/>
</dbReference>
<dbReference type="RefSeq" id="XP_030107865.1">
    <property type="nucleotide sequence ID" value="XM_030252005.2"/>
</dbReference>
<dbReference type="RefSeq" id="XP_030107870.1">
    <property type="nucleotide sequence ID" value="XM_030252010.2"/>
</dbReference>
<dbReference type="PDB" id="8I7O">
    <property type="method" value="EM"/>
    <property type="resolution" value="4.50 A"/>
    <property type="chains" value="H3/H4=1-319"/>
</dbReference>
<dbReference type="PDB" id="8I7R">
    <property type="method" value="EM"/>
    <property type="resolution" value="6.50 A"/>
    <property type="chains" value="H1/H2/H3/H4/H5/H6=1-319"/>
</dbReference>
<dbReference type="PDB" id="8IYJ">
    <property type="method" value="EM"/>
    <property type="resolution" value="3.50 A"/>
    <property type="chains" value="H/I/J/K/L/M/N/O7/O8/O9/P8/P9/Z2/Z3/Z4/Z5=1-319"/>
</dbReference>
<dbReference type="PDBsum" id="8I7O"/>
<dbReference type="PDBsum" id="8I7R"/>
<dbReference type="PDBsum" id="8IYJ"/>
<dbReference type="EMDB" id="EMD-35229"/>
<dbReference type="EMDB" id="EMD-35230"/>
<dbReference type="EMDB" id="EMD-35823"/>
<dbReference type="FunCoup" id="Q9D4K5">
    <property type="interactions" value="13"/>
</dbReference>
<dbReference type="STRING" id="10090.ENSMUSP00000028346"/>
<dbReference type="PhosphoSitePlus" id="Q9D4K5"/>
<dbReference type="PaxDb" id="10090-ENSMUSP00000028346"/>
<dbReference type="ProteomicsDB" id="275971"/>
<dbReference type="Antibodypedia" id="18988">
    <property type="antibodies" value="56 antibodies from 12 providers"/>
</dbReference>
<dbReference type="Ensembl" id="ENSMUST00000028346.4">
    <property type="protein sequence ID" value="ENSMUSP00000028346.4"/>
    <property type="gene ID" value="ENSMUSG00000026969.4"/>
</dbReference>
<dbReference type="GeneID" id="68222"/>
<dbReference type="KEGG" id="mmu:68222"/>
<dbReference type="UCSC" id="uc008iqr.2">
    <property type="organism name" value="mouse"/>
</dbReference>
<dbReference type="AGR" id="MGI:3605773"/>
<dbReference type="CTD" id="401565"/>
<dbReference type="MGI" id="MGI:3605773">
    <property type="gene designation" value="Cimip2a"/>
</dbReference>
<dbReference type="VEuPathDB" id="HostDB:ENSMUSG00000026969"/>
<dbReference type="eggNOG" id="ENOG502QSNH">
    <property type="taxonomic scope" value="Eukaryota"/>
</dbReference>
<dbReference type="GeneTree" id="ENSGT00730000111343"/>
<dbReference type="HOGENOM" id="CLU_076252_0_0_1"/>
<dbReference type="InParanoid" id="Q9D4K5"/>
<dbReference type="OMA" id="FRNPHCD"/>
<dbReference type="OrthoDB" id="2019884at2759"/>
<dbReference type="PhylomeDB" id="Q9D4K5"/>
<dbReference type="TreeFam" id="TF336316"/>
<dbReference type="BioGRID-ORCS" id="68222">
    <property type="hits" value="4 hits in 80 CRISPR screens"/>
</dbReference>
<dbReference type="PRO" id="PR:Q9D4K5"/>
<dbReference type="Proteomes" id="UP000000589">
    <property type="component" value="Chromosome 2"/>
</dbReference>
<dbReference type="RNAct" id="Q9D4K5">
    <property type="molecule type" value="protein"/>
</dbReference>
<dbReference type="Bgee" id="ENSMUSG00000026969">
    <property type="expression patterns" value="Expressed in seminiferous tubule of testis and 58 other cell types or tissues"/>
</dbReference>
<dbReference type="GO" id="GO:0160111">
    <property type="term" value="C:axonemal A tubule inner sheath"/>
    <property type="evidence" value="ECO:0000314"/>
    <property type="project" value="UniProtKB"/>
</dbReference>
<dbReference type="GO" id="GO:0036064">
    <property type="term" value="C:ciliary basal body"/>
    <property type="evidence" value="ECO:0007669"/>
    <property type="project" value="Ensembl"/>
</dbReference>
<dbReference type="GO" id="GO:0036126">
    <property type="term" value="C:sperm flagellum"/>
    <property type="evidence" value="ECO:0000314"/>
    <property type="project" value="UniProtKB"/>
</dbReference>
<dbReference type="GO" id="GO:0030317">
    <property type="term" value="P:flagellated sperm motility"/>
    <property type="evidence" value="ECO:0000314"/>
    <property type="project" value="UniProtKB"/>
</dbReference>
<dbReference type="InterPro" id="IPR052683">
    <property type="entry name" value="CIMIP2A"/>
</dbReference>
<dbReference type="InterPro" id="IPR018902">
    <property type="entry name" value="CMI2A-C-like_dom"/>
</dbReference>
<dbReference type="PANTHER" id="PTHR47299">
    <property type="entry name" value="PROTEIN FAM166A"/>
    <property type="match status" value="1"/>
</dbReference>
<dbReference type="PANTHER" id="PTHR47299:SF1">
    <property type="entry name" value="PROTEIN FAM166A"/>
    <property type="match status" value="1"/>
</dbReference>
<dbReference type="Pfam" id="PF10629">
    <property type="entry name" value="CMI2B-like"/>
    <property type="match status" value="1"/>
</dbReference>